<keyword id="KW-0426">Late protein</keyword>
<keyword id="KW-0472">Membrane</keyword>
<keyword id="KW-1185">Reference proteome</keyword>
<keyword id="KW-0812">Transmembrane</keyword>
<keyword id="KW-1133">Transmembrane helix</keyword>
<keyword id="KW-0946">Virion</keyword>
<protein>
    <recommendedName>
        <fullName>Protein I5 homolog</fullName>
    </recommendedName>
</protein>
<evidence type="ECO:0000250" key="1"/>
<evidence type="ECO:0000255" key="2"/>
<evidence type="ECO:0000305" key="3"/>
<dbReference type="EMBL" id="D00320">
    <property type="status" value="NOT_ANNOTATED_CDS"/>
    <property type="molecule type" value="Genomic_DNA"/>
</dbReference>
<dbReference type="EMBL" id="D00321">
    <property type="protein sequence ID" value="BAA00232.1"/>
    <property type="molecule type" value="Genomic_DNA"/>
</dbReference>
<dbReference type="EMBL" id="AJ223385">
    <property type="protein sequence ID" value="CAA11296.1"/>
    <property type="molecule type" value="Genomic_DNA"/>
</dbReference>
<dbReference type="EMBL" id="AF198100">
    <property type="protein sequence ID" value="AAF44429.1"/>
    <property type="molecule type" value="Genomic_DNA"/>
</dbReference>
<dbReference type="PIR" id="JS0228">
    <property type="entry name" value="WMVZ44"/>
</dbReference>
<dbReference type="RefSeq" id="NP_039048.1">
    <property type="nucleotide sequence ID" value="NC_002188.1"/>
</dbReference>
<dbReference type="GeneID" id="1486633"/>
<dbReference type="KEGG" id="vg:1486633"/>
<dbReference type="Proteomes" id="UP000008597">
    <property type="component" value="Segment"/>
</dbReference>
<dbReference type="GO" id="GO:0016020">
    <property type="term" value="C:membrane"/>
    <property type="evidence" value="ECO:0007669"/>
    <property type="project" value="UniProtKB-KW"/>
</dbReference>
<dbReference type="GO" id="GO:0055036">
    <property type="term" value="C:virion membrane"/>
    <property type="evidence" value="ECO:0007669"/>
    <property type="project" value="UniProtKB-SubCell"/>
</dbReference>
<dbReference type="InterPro" id="IPR006803">
    <property type="entry name" value="Poxvirus_I5"/>
</dbReference>
<dbReference type="Pfam" id="PF04713">
    <property type="entry name" value="Pox_I5"/>
    <property type="match status" value="1"/>
</dbReference>
<dbReference type="PIRSF" id="PIRSF003768">
    <property type="entry name" value="VAC_I5L"/>
    <property type="match status" value="1"/>
</dbReference>
<organismHost>
    <name type="scientific">Vertebrata</name>
    <dbReference type="NCBI Taxonomy" id="7742"/>
</organismHost>
<sequence length="81" mass="9123">MEIARETLITIGLTILVVLLIITGFSLVLRLIPGVYSSVSRSSFTAGRILRFMEIFSTIMFIPGIIILYAAYIRKIKMKNN</sequence>
<name>I5L_FOWPN</name>
<comment type="subcellular location">
    <subcellularLocation>
        <location evidence="1">Virion membrane</location>
        <topology>Multi-pass membrane protein</topology>
    </subcellularLocation>
    <text evidence="1">Probably localizes to the membrane of mature virions (MV).</text>
</comment>
<comment type="induction">
    <text>Expressed late in the viral replicative cycle.</text>
</comment>
<comment type="similarity">
    <text evidence="3">Belongs to the Chordopoxvirinae I5 family.</text>
</comment>
<feature type="chain" id="PRO_0000099730" description="Protein I5 homolog">
    <location>
        <begin position="1"/>
        <end position="81"/>
    </location>
</feature>
<feature type="transmembrane region" description="Helical" evidence="2">
    <location>
        <begin position="8"/>
        <end position="28"/>
    </location>
</feature>
<feature type="transmembrane region" description="Helical" evidence="2">
    <location>
        <begin position="53"/>
        <end position="73"/>
    </location>
</feature>
<accession>P18521</accession>
<reference key="1">
    <citation type="journal article" date="1988" name="J. Gen. Virol.">
        <title>Comparison of a conserved region in fowlpox virus and vaccinia virus genomes and the translocation of the fowlpox virus thymidine kinase gene.</title>
        <authorList>
            <person name="Binns M.M."/>
            <person name="Tomley F.M."/>
            <person name="Campbell J."/>
            <person name="Boursnell M.E.G."/>
        </authorList>
    </citation>
    <scope>NUCLEOTIDE SEQUENCE [GENOMIC DNA]</scope>
    <source>
        <strain>FP-9 / Isolate HP-444</strain>
    </source>
</reference>
<reference key="2">
    <citation type="journal article" date="1992" name="Virus Res.">
        <title>Gene translocations in poxviruses: the fowlpox virus thymidine kinase gene is flanked by 15 bp direct repeats and occupies the locus which in vaccinia virus is occupied by the ribonucleotide reductase large subunit gene.</title>
        <authorList>
            <person name="Binns M.M."/>
            <person name="Boursnell M.E.G."/>
            <person name="Skinner M.A."/>
        </authorList>
    </citation>
    <scope>NUCLEOTIDE SEQUENCE [GENOMIC DNA]</scope>
    <source>
        <strain>FP-9 / Isolate HP-440</strain>
    </source>
</reference>
<reference key="3">
    <citation type="journal article" date="2000" name="J. Virol.">
        <title>The genome of fowlpox virus.</title>
        <authorList>
            <person name="Afonso C.L."/>
            <person name="Tulman E.R."/>
            <person name="Lu Z."/>
            <person name="Zsak L."/>
            <person name="Kutish G.F."/>
            <person name="Rock D.L."/>
        </authorList>
    </citation>
    <scope>NUCLEOTIDE SEQUENCE [LARGE SCALE GENOMIC DNA]</scope>
</reference>
<organism>
    <name type="scientific">Fowlpox virus (strain NVSL)</name>
    <name type="common">FPV</name>
    <dbReference type="NCBI Taxonomy" id="928301"/>
    <lineage>
        <taxon>Viruses</taxon>
        <taxon>Varidnaviria</taxon>
        <taxon>Bamfordvirae</taxon>
        <taxon>Nucleocytoviricota</taxon>
        <taxon>Pokkesviricetes</taxon>
        <taxon>Chitovirales</taxon>
        <taxon>Poxviridae</taxon>
        <taxon>Chordopoxvirinae</taxon>
        <taxon>Avipoxvirus</taxon>
        <taxon>Fowlpox virus</taxon>
    </lineage>
</organism>
<proteinExistence type="evidence at transcript level"/>
<gene>
    <name type="ordered locus">FPV085</name>
    <name type="ORF">FPI5L</name>
</gene>